<comment type="similarity">
    <text evidence="1">Belongs to the bacterial ribosomal protein bS21 family.</text>
</comment>
<keyword id="KW-1185">Reference proteome</keyword>
<keyword id="KW-0687">Ribonucleoprotein</keyword>
<keyword id="KW-0689">Ribosomal protein</keyword>
<accession>A1S3S7</accession>
<proteinExistence type="inferred from homology"/>
<dbReference type="EMBL" id="CP000507">
    <property type="protein sequence ID" value="ABL99033.1"/>
    <property type="molecule type" value="Genomic_DNA"/>
</dbReference>
<dbReference type="RefSeq" id="WP_011758943.1">
    <property type="nucleotide sequence ID" value="NC_008700.1"/>
</dbReference>
<dbReference type="SMR" id="A1S3S7"/>
<dbReference type="STRING" id="326297.Sama_0826"/>
<dbReference type="KEGG" id="saz:Sama_0826"/>
<dbReference type="eggNOG" id="COG0828">
    <property type="taxonomic scope" value="Bacteria"/>
</dbReference>
<dbReference type="HOGENOM" id="CLU_159258_1_0_6"/>
<dbReference type="OrthoDB" id="9799244at2"/>
<dbReference type="Proteomes" id="UP000009175">
    <property type="component" value="Chromosome"/>
</dbReference>
<dbReference type="GO" id="GO:1990904">
    <property type="term" value="C:ribonucleoprotein complex"/>
    <property type="evidence" value="ECO:0007669"/>
    <property type="project" value="UniProtKB-KW"/>
</dbReference>
<dbReference type="GO" id="GO:0005840">
    <property type="term" value="C:ribosome"/>
    <property type="evidence" value="ECO:0007669"/>
    <property type="project" value="UniProtKB-KW"/>
</dbReference>
<dbReference type="GO" id="GO:0003735">
    <property type="term" value="F:structural constituent of ribosome"/>
    <property type="evidence" value="ECO:0007669"/>
    <property type="project" value="InterPro"/>
</dbReference>
<dbReference type="GO" id="GO:0006412">
    <property type="term" value="P:translation"/>
    <property type="evidence" value="ECO:0007669"/>
    <property type="project" value="UniProtKB-UniRule"/>
</dbReference>
<dbReference type="Gene3D" id="1.20.5.1150">
    <property type="entry name" value="Ribosomal protein S8"/>
    <property type="match status" value="1"/>
</dbReference>
<dbReference type="HAMAP" id="MF_00358">
    <property type="entry name" value="Ribosomal_bS21"/>
    <property type="match status" value="1"/>
</dbReference>
<dbReference type="InterPro" id="IPR001911">
    <property type="entry name" value="Ribosomal_bS21"/>
</dbReference>
<dbReference type="InterPro" id="IPR018278">
    <property type="entry name" value="Ribosomal_bS21_CS"/>
</dbReference>
<dbReference type="InterPro" id="IPR038380">
    <property type="entry name" value="Ribosomal_bS21_sf"/>
</dbReference>
<dbReference type="NCBIfam" id="TIGR00030">
    <property type="entry name" value="S21p"/>
    <property type="match status" value="1"/>
</dbReference>
<dbReference type="PANTHER" id="PTHR21109">
    <property type="entry name" value="MITOCHONDRIAL 28S RIBOSOMAL PROTEIN S21"/>
    <property type="match status" value="1"/>
</dbReference>
<dbReference type="PANTHER" id="PTHR21109:SF22">
    <property type="entry name" value="SMALL RIBOSOMAL SUBUNIT PROTEIN BS21"/>
    <property type="match status" value="1"/>
</dbReference>
<dbReference type="Pfam" id="PF01165">
    <property type="entry name" value="Ribosomal_S21"/>
    <property type="match status" value="1"/>
</dbReference>
<dbReference type="PRINTS" id="PR00976">
    <property type="entry name" value="RIBOSOMALS21"/>
</dbReference>
<dbReference type="PROSITE" id="PS01181">
    <property type="entry name" value="RIBOSOMAL_S21"/>
    <property type="match status" value="1"/>
</dbReference>
<gene>
    <name evidence="1" type="primary">rpsU</name>
    <name type="ordered locus">Sama_0826</name>
</gene>
<protein>
    <recommendedName>
        <fullName evidence="1">Small ribosomal subunit protein bS21</fullName>
    </recommendedName>
    <alternativeName>
        <fullName evidence="2">30S ribosomal protein S21</fullName>
    </alternativeName>
</protein>
<sequence length="71" mass="8331">MPIVKVRENEPFDVALRRFKRSCEKAGILADVRAREFYEKPTTARKRAKAAAVKRLAKKLSRENARRVRLY</sequence>
<name>RS21_SHEAM</name>
<feature type="chain" id="PRO_1000005168" description="Small ribosomal subunit protein bS21">
    <location>
        <begin position="1"/>
        <end position="71"/>
    </location>
</feature>
<reference key="1">
    <citation type="submission" date="2006-12" db="EMBL/GenBank/DDBJ databases">
        <title>Complete sequence of Shewanella amazonensis SB2B.</title>
        <authorList>
            <consortium name="US DOE Joint Genome Institute"/>
            <person name="Copeland A."/>
            <person name="Lucas S."/>
            <person name="Lapidus A."/>
            <person name="Barry K."/>
            <person name="Detter J.C."/>
            <person name="Glavina del Rio T."/>
            <person name="Hammon N."/>
            <person name="Israni S."/>
            <person name="Dalin E."/>
            <person name="Tice H."/>
            <person name="Pitluck S."/>
            <person name="Munk A.C."/>
            <person name="Brettin T."/>
            <person name="Bruce D."/>
            <person name="Han C."/>
            <person name="Tapia R."/>
            <person name="Gilna P."/>
            <person name="Schmutz J."/>
            <person name="Larimer F."/>
            <person name="Land M."/>
            <person name="Hauser L."/>
            <person name="Kyrpides N."/>
            <person name="Mikhailova N."/>
            <person name="Fredrickson J."/>
            <person name="Richardson P."/>
        </authorList>
    </citation>
    <scope>NUCLEOTIDE SEQUENCE [LARGE SCALE GENOMIC DNA]</scope>
    <source>
        <strain>ATCC BAA-1098 / SB2B</strain>
    </source>
</reference>
<evidence type="ECO:0000255" key="1">
    <source>
        <dbReference type="HAMAP-Rule" id="MF_00358"/>
    </source>
</evidence>
<evidence type="ECO:0000305" key="2"/>
<organism>
    <name type="scientific">Shewanella amazonensis (strain ATCC BAA-1098 / SB2B)</name>
    <dbReference type="NCBI Taxonomy" id="326297"/>
    <lineage>
        <taxon>Bacteria</taxon>
        <taxon>Pseudomonadati</taxon>
        <taxon>Pseudomonadota</taxon>
        <taxon>Gammaproteobacteria</taxon>
        <taxon>Alteromonadales</taxon>
        <taxon>Shewanellaceae</taxon>
        <taxon>Shewanella</taxon>
    </lineage>
</organism>